<feature type="signal peptide" evidence="1">
    <location>
        <begin position="1"/>
        <end position="32"/>
    </location>
</feature>
<feature type="chain" id="PRO_0000035685" description="Cellulose synthase operon protein C">
    <location>
        <begin position="33"/>
        <end position="1302"/>
    </location>
</feature>
<feature type="repeat" description="TPR 1">
    <location>
        <begin position="64"/>
        <end position="97"/>
    </location>
</feature>
<feature type="repeat" description="TPR 2">
    <location>
        <begin position="147"/>
        <end position="180"/>
    </location>
</feature>
<feature type="repeat" description="TPR 3">
    <location>
        <begin position="306"/>
        <end position="339"/>
    </location>
</feature>
<feature type="repeat" description="TPR 4">
    <location>
        <begin position="340"/>
        <end position="373"/>
    </location>
</feature>
<feature type="repeat" description="TPR 5">
    <location>
        <begin position="572"/>
        <end position="605"/>
    </location>
</feature>
<feature type="repeat" description="TPR 6">
    <location>
        <begin position="716"/>
        <end position="749"/>
    </location>
</feature>
<feature type="repeat" description="TPR 7">
    <location>
        <begin position="750"/>
        <end position="783"/>
    </location>
</feature>
<accession>P37718</accession>
<dbReference type="EMBL" id="X54676">
    <property type="protein sequence ID" value="CAA38489.1"/>
    <property type="molecule type" value="Genomic_DNA"/>
</dbReference>
<dbReference type="UniPathway" id="UPA00694"/>
<dbReference type="GO" id="GO:0009279">
    <property type="term" value="C:cell outer membrane"/>
    <property type="evidence" value="ECO:0007669"/>
    <property type="project" value="UniProtKB-SubCell"/>
</dbReference>
<dbReference type="GO" id="GO:0030244">
    <property type="term" value="P:cellulose biosynthetic process"/>
    <property type="evidence" value="ECO:0007669"/>
    <property type="project" value="UniProtKB-KW"/>
</dbReference>
<dbReference type="GO" id="GO:0006011">
    <property type="term" value="P:UDP-alpha-D-glucose metabolic process"/>
    <property type="evidence" value="ECO:0007669"/>
    <property type="project" value="InterPro"/>
</dbReference>
<dbReference type="Gene3D" id="1.25.40.10">
    <property type="entry name" value="Tetratricopeptide repeat domain"/>
    <property type="match status" value="4"/>
</dbReference>
<dbReference type="InterPro" id="IPR008410">
    <property type="entry name" value="BCSC_C"/>
</dbReference>
<dbReference type="InterPro" id="IPR003921">
    <property type="entry name" value="Cell_synth_C"/>
</dbReference>
<dbReference type="InterPro" id="IPR011990">
    <property type="entry name" value="TPR-like_helical_dom_sf"/>
</dbReference>
<dbReference type="InterPro" id="IPR019734">
    <property type="entry name" value="TPR_rpt"/>
</dbReference>
<dbReference type="PANTHER" id="PTHR12558">
    <property type="entry name" value="CELL DIVISION CYCLE 16,23,27"/>
    <property type="match status" value="1"/>
</dbReference>
<dbReference type="PANTHER" id="PTHR12558:SF13">
    <property type="entry name" value="CELL DIVISION CYCLE PROTEIN 27 HOMOLOG"/>
    <property type="match status" value="1"/>
</dbReference>
<dbReference type="Pfam" id="PF05420">
    <property type="entry name" value="BCSC_C"/>
    <property type="match status" value="1"/>
</dbReference>
<dbReference type="Pfam" id="PF14559">
    <property type="entry name" value="TPR_19"/>
    <property type="match status" value="3"/>
</dbReference>
<dbReference type="PRINTS" id="PR01441">
    <property type="entry name" value="CELLSNTHASEC"/>
</dbReference>
<dbReference type="SMART" id="SM00028">
    <property type="entry name" value="TPR"/>
    <property type="match status" value="5"/>
</dbReference>
<dbReference type="SUPFAM" id="SSF48452">
    <property type="entry name" value="TPR-like"/>
    <property type="match status" value="3"/>
</dbReference>
<dbReference type="PROSITE" id="PS50005">
    <property type="entry name" value="TPR"/>
    <property type="match status" value="4"/>
</dbReference>
<dbReference type="PROSITE" id="PS50293">
    <property type="entry name" value="TPR_REGION"/>
    <property type="match status" value="3"/>
</dbReference>
<name>ACSC_KOMXY</name>
<protein>
    <recommendedName>
        <fullName>Cellulose synthase operon protein C</fullName>
    </recommendedName>
</protein>
<proteinExistence type="evidence at protein level"/>
<gene>
    <name type="primary">acsC</name>
</gene>
<keyword id="KW-0973">c-di-GMP</keyword>
<keyword id="KW-0998">Cell outer membrane</keyword>
<keyword id="KW-0135">Cellulose biosynthesis</keyword>
<keyword id="KW-0472">Membrane</keyword>
<keyword id="KW-0677">Repeat</keyword>
<keyword id="KW-0732">Signal</keyword>
<keyword id="KW-0802">TPR repeat</keyword>
<sequence>MTHKRYASSLSAGLLATTCVAGLLLQANGARAQQAAEAQAPASSTTMMQAATVAPAQSGQAAVVQRLVQQARFWMQQHQYENARQSLQSAARLAPDSVDLLEAEGEYQSHIGNRDAALDTQRRLHQAAPGSTYESQLNDLLHEQAISQPDLAHARSLAASGHSDQAVEAYQHLFNGSTPTPSLAVEYYQTLAGVSGQAGTAQDGLIRLVKANPSDFRAQLALAQVLTYQPGTRMEGLQRLQALQKYQSSAPVEAATAEKSYRQTLSWLPVTPETLPLMQKWLDAHPSDSALRTHMAEPAGGPPDKGALARQDGFKALNAGRLSAAQAAFQSALNLNAKDGDALGGLGLVAMRAGHNEEAHRYLEDAIAADPKNAAHWRPALAGMAVGEEYGSVRRLIASGQTQEAEQRLMTLARQPGQSEGATLMLADLQRSTGQTGEAERNYRAILARNGDNPIALMGLARVLMGEGQESEANALLSRLGGRYSDQVQQIEVSGIMAEAARTSDSAQKVSLLRQAMTKAPDDPWLRINLANALQQQGDSAEAANVMRPLLTSPRTPADYQAAILYASGNGNDTLARRLLAGLSPDDYSPAIRTIADEMAIKADLASRLSMVSNPTPLVREALAAPDPTGARGVAVADLFRQRGDMLHAHMALRIASTRNIDLTTEQRLAYATEYMKISNPVAAARLLAPLGDGSGTATGSAMSPDQRQTLMQLRMGISVAQSDLLNQRGDQAAAYDHLAPALQADPEATSPKLALARLYNGRGKYGHALDIDLAVLRHNPQDLDARQAAVQAAANDGKDNLAMQLAQDGVQQSPMDARSWLGMAVADRAVGHGDRTLADLRRAYELRLQQLKISRGDAIGGDETQATAPPTANPFRRDAYGHALSLGAPPGENGYSTAGSVPEISDQMLSSINGQIHTLSEDMAPSVDAGLGFRVRSGTPGMGALTEASVPIVGRIPLQAGTSALTFTATPTFLTSGHLPQTGYDIPRFGTNLFALERNLQNQNNSAEHRINTDTIGREAGVAPDVRFANNWVSADVGASPLGFTLPNVIGGVEFAPRVGPVTFRVSGERRSITNSVLSYGGMTDALTGKKWGGVVTNHFHGQVEATLGNTIVYGGGGYAIQTGHHVQSNTEVEGGLGANTLVYRNRKHEVRVGVNLTYFGYKHNEDFYTYGQGGYFSPQSYFAATVPVRYSGHSGLFDWDVTGSIGYQLFHEHSSAFFPTNPVYQALANGLAGVSTAELSLESARYPGDDVGSLVGGFDGRVGYRVSHSLRLDLSGRFQKAGNWDEGGAMISAHYLIMDQ</sequence>
<organism>
    <name type="scientific">Komagataeibacter xylinus</name>
    <name type="common">Gluconacetobacter xylinus</name>
    <dbReference type="NCBI Taxonomy" id="28448"/>
    <lineage>
        <taxon>Bacteria</taxon>
        <taxon>Pseudomonadati</taxon>
        <taxon>Pseudomonadota</taxon>
        <taxon>Alphaproteobacteria</taxon>
        <taxon>Acetobacterales</taxon>
        <taxon>Acetobacteraceae</taxon>
        <taxon>Komagataeibacter</taxon>
    </lineage>
</organism>
<reference key="1">
    <citation type="journal article" date="1994" name="J. Bacteriol.">
        <title>Characterization of genes in the cellulose-synthesizing operon (acs operon) of Acetobacter xylinum: implications for cellulose crystallization.</title>
        <authorList>
            <person name="Saxena I.M."/>
            <person name="Kudlicka K."/>
            <person name="Okuda K."/>
            <person name="Brown R.M. Jr."/>
        </authorList>
    </citation>
    <scope>NUCLEOTIDE SEQUENCE [GENOMIC DNA]</scope>
    <source>
        <strain>ATCC 53582 / NQ5</strain>
    </source>
</reference>
<reference key="2">
    <citation type="journal article" date="2001" name="J. Bacteriol.">
        <title>Localization of c-di-GMP-binding protein with the linear terminal complexes of Acetobacter xylinum.</title>
        <authorList>
            <person name="Kimura S."/>
            <person name="Chen H.P."/>
            <person name="Saxena I.M."/>
            <person name="Brown R.M. Jr."/>
            <person name="Itoh T."/>
        </authorList>
    </citation>
    <scope>TOPOLOGY</scope>
</reference>
<evidence type="ECO:0000255" key="1"/>
<evidence type="ECO:0000305" key="2"/>
<comment type="function">
    <text>Required for maximal bacterial cellulose synthesis. It may be involved in the formation of a membrane complex for extrusion of the cellulose product.</text>
</comment>
<comment type="pathway">
    <text>Glycan metabolism; bacterial cellulose biosynthesis.</text>
</comment>
<comment type="subcellular location">
    <subcellularLocation>
        <location evidence="2">Cell outer membrane</location>
        <topology evidence="2">Peripheral membrane protein</topology>
    </subcellularLocation>
</comment>
<comment type="similarity">
    <text evidence="2">Belongs to the AcsC/BcsC family.</text>
</comment>